<accession>Q54EH6</accession>
<reference key="1">
    <citation type="journal article" date="2005" name="Nature">
        <title>The genome of the social amoeba Dictyostelium discoideum.</title>
        <authorList>
            <person name="Eichinger L."/>
            <person name="Pachebat J.A."/>
            <person name="Gloeckner G."/>
            <person name="Rajandream M.A."/>
            <person name="Sucgang R."/>
            <person name="Berriman M."/>
            <person name="Song J."/>
            <person name="Olsen R."/>
            <person name="Szafranski K."/>
            <person name="Xu Q."/>
            <person name="Tunggal B."/>
            <person name="Kummerfeld S."/>
            <person name="Madera M."/>
            <person name="Konfortov B.A."/>
            <person name="Rivero F."/>
            <person name="Bankier A.T."/>
            <person name="Lehmann R."/>
            <person name="Hamlin N."/>
            <person name="Davies R."/>
            <person name="Gaudet P."/>
            <person name="Fey P."/>
            <person name="Pilcher K."/>
            <person name="Chen G."/>
            <person name="Saunders D."/>
            <person name="Sodergren E.J."/>
            <person name="Davis P."/>
            <person name="Kerhornou A."/>
            <person name="Nie X."/>
            <person name="Hall N."/>
            <person name="Anjard C."/>
            <person name="Hemphill L."/>
            <person name="Bason N."/>
            <person name="Farbrother P."/>
            <person name="Desany B."/>
            <person name="Just E."/>
            <person name="Morio T."/>
            <person name="Rost R."/>
            <person name="Churcher C.M."/>
            <person name="Cooper J."/>
            <person name="Haydock S."/>
            <person name="van Driessche N."/>
            <person name="Cronin A."/>
            <person name="Goodhead I."/>
            <person name="Muzny D.M."/>
            <person name="Mourier T."/>
            <person name="Pain A."/>
            <person name="Lu M."/>
            <person name="Harper D."/>
            <person name="Lindsay R."/>
            <person name="Hauser H."/>
            <person name="James K.D."/>
            <person name="Quiles M."/>
            <person name="Madan Babu M."/>
            <person name="Saito T."/>
            <person name="Buchrieser C."/>
            <person name="Wardroper A."/>
            <person name="Felder M."/>
            <person name="Thangavelu M."/>
            <person name="Johnson D."/>
            <person name="Knights A."/>
            <person name="Loulseged H."/>
            <person name="Mungall K.L."/>
            <person name="Oliver K."/>
            <person name="Price C."/>
            <person name="Quail M.A."/>
            <person name="Urushihara H."/>
            <person name="Hernandez J."/>
            <person name="Rabbinowitsch E."/>
            <person name="Steffen D."/>
            <person name="Sanders M."/>
            <person name="Ma J."/>
            <person name="Kohara Y."/>
            <person name="Sharp S."/>
            <person name="Simmonds M.N."/>
            <person name="Spiegler S."/>
            <person name="Tivey A."/>
            <person name="Sugano S."/>
            <person name="White B."/>
            <person name="Walker D."/>
            <person name="Woodward J.R."/>
            <person name="Winckler T."/>
            <person name="Tanaka Y."/>
            <person name="Shaulsky G."/>
            <person name="Schleicher M."/>
            <person name="Weinstock G.M."/>
            <person name="Rosenthal A."/>
            <person name="Cox E.C."/>
            <person name="Chisholm R.L."/>
            <person name="Gibbs R.A."/>
            <person name="Loomis W.F."/>
            <person name="Platzer M."/>
            <person name="Kay R.R."/>
            <person name="Williams J.G."/>
            <person name="Dear P.H."/>
            <person name="Noegel A.A."/>
            <person name="Barrell B.G."/>
            <person name="Kuspa A."/>
        </authorList>
    </citation>
    <scope>NUCLEOTIDE SEQUENCE [LARGE SCALE GENOMIC DNA]</scope>
    <source>
        <strain>AX4</strain>
    </source>
</reference>
<protein>
    <recommendedName>
        <fullName>Probable DNA replication complex GINS protein PSF3</fullName>
    </recommendedName>
    <alternativeName>
        <fullName>GINS complex subunit 3</fullName>
    </alternativeName>
</protein>
<sequence>MSYFDINDILAEEQKITCNFFYDAYNLGQLEEGSRDPDMKKGSKVDLPYWMALALAKSNFVSVIMPPEYQDEYKNKLIADPNVISMRLFPYYDKIGVQLSDFFGDRKLKLLLFRVFRERFLNIYSQSINLKETDISKILGNLTYQEREVFSNGYKSSNDYDKWMSRKGEKVEKNTNNLLISTSSNNKNNSSNSSNNNSNNNNNNNNNNNNNNNNNNNNNNNNSNSNSNSNSNSSNGNNNNNSQNSSYKNTQSTTVKKRKRMFDDE</sequence>
<organism>
    <name type="scientific">Dictyostelium discoideum</name>
    <name type="common">Social amoeba</name>
    <dbReference type="NCBI Taxonomy" id="44689"/>
    <lineage>
        <taxon>Eukaryota</taxon>
        <taxon>Amoebozoa</taxon>
        <taxon>Evosea</taxon>
        <taxon>Eumycetozoa</taxon>
        <taxon>Dictyostelia</taxon>
        <taxon>Dictyosteliales</taxon>
        <taxon>Dictyosteliaceae</taxon>
        <taxon>Dictyostelium</taxon>
    </lineage>
</organism>
<gene>
    <name type="primary">gins3</name>
    <name type="ORF">DDB_G0291506</name>
</gene>
<comment type="function">
    <text evidence="1">The GINS complex plays an essential role in the initiation of DNA replication.</text>
</comment>
<comment type="subunit">
    <text evidence="1">Component of the GINS complex which is a heterotetramer of gins1, gins2, gins3 and gins4.</text>
</comment>
<comment type="subcellular location">
    <subcellularLocation>
        <location evidence="1">Nucleus</location>
    </subcellularLocation>
</comment>
<comment type="similarity">
    <text evidence="3">Belongs to the GINS3/PSF3 family.</text>
</comment>
<keyword id="KW-0235">DNA replication</keyword>
<keyword id="KW-0539">Nucleus</keyword>
<keyword id="KW-1185">Reference proteome</keyword>
<proteinExistence type="inferred from homology"/>
<evidence type="ECO:0000250" key="1"/>
<evidence type="ECO:0000256" key="2">
    <source>
        <dbReference type="SAM" id="MobiDB-lite"/>
    </source>
</evidence>
<evidence type="ECO:0000305" key="3"/>
<dbReference type="EMBL" id="AAFI02000177">
    <property type="protein sequence ID" value="EAL61737.1"/>
    <property type="molecule type" value="Genomic_DNA"/>
</dbReference>
<dbReference type="RefSeq" id="XP_635264.1">
    <property type="nucleotide sequence ID" value="XM_630172.1"/>
</dbReference>
<dbReference type="SMR" id="Q54EH6"/>
<dbReference type="FunCoup" id="Q54EH6">
    <property type="interactions" value="271"/>
</dbReference>
<dbReference type="STRING" id="44689.Q54EH6"/>
<dbReference type="PaxDb" id="44689-DDB0266355"/>
<dbReference type="EnsemblProtists" id="EAL61737">
    <property type="protein sequence ID" value="EAL61737"/>
    <property type="gene ID" value="DDB_G0291506"/>
</dbReference>
<dbReference type="GeneID" id="8628209"/>
<dbReference type="KEGG" id="ddi:DDB_G0291506"/>
<dbReference type="dictyBase" id="DDB_G0291506">
    <property type="gene designation" value="gins3"/>
</dbReference>
<dbReference type="VEuPathDB" id="AmoebaDB:DDB_G0291506"/>
<dbReference type="eggNOG" id="KOG1106">
    <property type="taxonomic scope" value="Eukaryota"/>
</dbReference>
<dbReference type="HOGENOM" id="CLU_1051423_0_0_1"/>
<dbReference type="InParanoid" id="Q54EH6"/>
<dbReference type="OMA" id="IYKEGWR"/>
<dbReference type="PhylomeDB" id="Q54EH6"/>
<dbReference type="Reactome" id="R-DDI-176974">
    <property type="pathway name" value="Unwinding of DNA"/>
</dbReference>
<dbReference type="PRO" id="PR:Q54EH6"/>
<dbReference type="Proteomes" id="UP000002195">
    <property type="component" value="Chromosome 6"/>
</dbReference>
<dbReference type="GO" id="GO:0000811">
    <property type="term" value="C:GINS complex"/>
    <property type="evidence" value="ECO:0000250"/>
    <property type="project" value="dictyBase"/>
</dbReference>
<dbReference type="GO" id="GO:0006260">
    <property type="term" value="P:DNA replication"/>
    <property type="evidence" value="ECO:0000250"/>
    <property type="project" value="dictyBase"/>
</dbReference>
<dbReference type="GO" id="GO:1902975">
    <property type="term" value="P:mitotic DNA replication initiation"/>
    <property type="evidence" value="ECO:0000318"/>
    <property type="project" value="GO_Central"/>
</dbReference>
<dbReference type="CDD" id="cd11713">
    <property type="entry name" value="GINS_A_psf3"/>
    <property type="match status" value="1"/>
</dbReference>
<dbReference type="CDD" id="cd21693">
    <property type="entry name" value="GINS_B_Psf3"/>
    <property type="match status" value="1"/>
</dbReference>
<dbReference type="Gene3D" id="1.20.58.2050">
    <property type="match status" value="1"/>
</dbReference>
<dbReference type="InterPro" id="IPR021151">
    <property type="entry name" value="GINS_A"/>
</dbReference>
<dbReference type="InterPro" id="IPR036224">
    <property type="entry name" value="GINS_bundle-like_dom_sf"/>
</dbReference>
<dbReference type="InterPro" id="IPR010492">
    <property type="entry name" value="GINS_Psf3"/>
</dbReference>
<dbReference type="InterPro" id="IPR038437">
    <property type="entry name" value="GINS_Psf3_sf"/>
</dbReference>
<dbReference type="InterPro" id="IPR055221">
    <property type="entry name" value="PSF3_N"/>
</dbReference>
<dbReference type="PANTHER" id="PTHR22768">
    <property type="entry name" value="DNA REPLICATION COMPLEX GINS PROTEIN PSF3"/>
    <property type="match status" value="1"/>
</dbReference>
<dbReference type="PANTHER" id="PTHR22768:SF0">
    <property type="entry name" value="DNA REPLICATION COMPLEX GINS PROTEIN PSF3"/>
    <property type="match status" value="1"/>
</dbReference>
<dbReference type="Pfam" id="PF22466">
    <property type="entry name" value="PSF3_N"/>
    <property type="match status" value="1"/>
</dbReference>
<dbReference type="Pfam" id="PF05916">
    <property type="entry name" value="Sld5"/>
    <property type="match status" value="1"/>
</dbReference>
<dbReference type="SUPFAM" id="SSF158573">
    <property type="entry name" value="GINS helical bundle-like"/>
    <property type="match status" value="1"/>
</dbReference>
<dbReference type="SUPFAM" id="SSF160059">
    <property type="entry name" value="PriA/YqbF domain"/>
    <property type="match status" value="1"/>
</dbReference>
<name>PSF3_DICDI</name>
<feature type="chain" id="PRO_0000327618" description="Probable DNA replication complex GINS protein PSF3">
    <location>
        <begin position="1"/>
        <end position="265"/>
    </location>
</feature>
<feature type="region of interest" description="Disordered" evidence="2">
    <location>
        <begin position="180"/>
        <end position="265"/>
    </location>
</feature>
<feature type="compositionally biased region" description="Low complexity" evidence="2">
    <location>
        <begin position="183"/>
        <end position="246"/>
    </location>
</feature>
<feature type="compositionally biased region" description="Basic residues" evidence="2">
    <location>
        <begin position="255"/>
        <end position="265"/>
    </location>
</feature>